<reference key="1">
    <citation type="submission" date="2007-05" db="EMBL/GenBank/DDBJ databases">
        <title>Complete sequence of chromosome of Acidiphilium cryptum JF-5.</title>
        <authorList>
            <consortium name="US DOE Joint Genome Institute"/>
            <person name="Copeland A."/>
            <person name="Lucas S."/>
            <person name="Lapidus A."/>
            <person name="Barry K."/>
            <person name="Detter J.C."/>
            <person name="Glavina del Rio T."/>
            <person name="Hammon N."/>
            <person name="Israni S."/>
            <person name="Dalin E."/>
            <person name="Tice H."/>
            <person name="Pitluck S."/>
            <person name="Sims D."/>
            <person name="Brettin T."/>
            <person name="Bruce D."/>
            <person name="Han C."/>
            <person name="Schmutz J."/>
            <person name="Larimer F."/>
            <person name="Land M."/>
            <person name="Hauser L."/>
            <person name="Kyrpides N."/>
            <person name="Kim E."/>
            <person name="Magnuson T."/>
            <person name="Richardson P."/>
        </authorList>
    </citation>
    <scope>NUCLEOTIDE SEQUENCE [LARGE SCALE GENOMIC DNA]</scope>
    <source>
        <strain>JF-5</strain>
    </source>
</reference>
<dbReference type="EMBL" id="CP000697">
    <property type="protein sequence ID" value="ABQ29268.1"/>
    <property type="molecule type" value="Genomic_DNA"/>
</dbReference>
<dbReference type="RefSeq" id="WP_007424241.1">
    <property type="nucleotide sequence ID" value="NC_009484.1"/>
</dbReference>
<dbReference type="SMR" id="A5FUI6"/>
<dbReference type="STRING" id="349163.Acry_0039"/>
<dbReference type="KEGG" id="acr:Acry_0039"/>
<dbReference type="eggNOG" id="COG0267">
    <property type="taxonomic scope" value="Bacteria"/>
</dbReference>
<dbReference type="HOGENOM" id="CLU_190949_1_1_5"/>
<dbReference type="Proteomes" id="UP000000245">
    <property type="component" value="Chromosome"/>
</dbReference>
<dbReference type="GO" id="GO:0022625">
    <property type="term" value="C:cytosolic large ribosomal subunit"/>
    <property type="evidence" value="ECO:0007669"/>
    <property type="project" value="TreeGrafter"/>
</dbReference>
<dbReference type="GO" id="GO:0003735">
    <property type="term" value="F:structural constituent of ribosome"/>
    <property type="evidence" value="ECO:0007669"/>
    <property type="project" value="InterPro"/>
</dbReference>
<dbReference type="GO" id="GO:0006412">
    <property type="term" value="P:translation"/>
    <property type="evidence" value="ECO:0007669"/>
    <property type="project" value="UniProtKB-UniRule"/>
</dbReference>
<dbReference type="Gene3D" id="2.20.28.120">
    <property type="entry name" value="Ribosomal protein L33"/>
    <property type="match status" value="1"/>
</dbReference>
<dbReference type="HAMAP" id="MF_00294">
    <property type="entry name" value="Ribosomal_bL33"/>
    <property type="match status" value="1"/>
</dbReference>
<dbReference type="InterPro" id="IPR001705">
    <property type="entry name" value="Ribosomal_bL33"/>
</dbReference>
<dbReference type="InterPro" id="IPR018264">
    <property type="entry name" value="Ribosomal_bL33_CS"/>
</dbReference>
<dbReference type="InterPro" id="IPR038584">
    <property type="entry name" value="Ribosomal_bL33_sf"/>
</dbReference>
<dbReference type="InterPro" id="IPR011332">
    <property type="entry name" value="Ribosomal_zn-bd"/>
</dbReference>
<dbReference type="NCBIfam" id="NF001860">
    <property type="entry name" value="PRK00595.1"/>
    <property type="match status" value="1"/>
</dbReference>
<dbReference type="NCBIfam" id="TIGR01023">
    <property type="entry name" value="rpmG_bact"/>
    <property type="match status" value="1"/>
</dbReference>
<dbReference type="PANTHER" id="PTHR15238">
    <property type="entry name" value="54S RIBOSOMAL PROTEIN L39, MITOCHONDRIAL"/>
    <property type="match status" value="1"/>
</dbReference>
<dbReference type="PANTHER" id="PTHR15238:SF1">
    <property type="entry name" value="LARGE RIBOSOMAL SUBUNIT PROTEIN BL33M"/>
    <property type="match status" value="1"/>
</dbReference>
<dbReference type="Pfam" id="PF00471">
    <property type="entry name" value="Ribosomal_L33"/>
    <property type="match status" value="1"/>
</dbReference>
<dbReference type="SUPFAM" id="SSF57829">
    <property type="entry name" value="Zn-binding ribosomal proteins"/>
    <property type="match status" value="1"/>
</dbReference>
<dbReference type="PROSITE" id="PS00582">
    <property type="entry name" value="RIBOSOMAL_L33"/>
    <property type="match status" value="1"/>
</dbReference>
<organism>
    <name type="scientific">Acidiphilium cryptum (strain JF-5)</name>
    <dbReference type="NCBI Taxonomy" id="349163"/>
    <lineage>
        <taxon>Bacteria</taxon>
        <taxon>Pseudomonadati</taxon>
        <taxon>Pseudomonadota</taxon>
        <taxon>Alphaproteobacteria</taxon>
        <taxon>Acetobacterales</taxon>
        <taxon>Acidocellaceae</taxon>
        <taxon>Acidiphilium</taxon>
    </lineage>
</organism>
<name>RL33_ACICJ</name>
<proteinExistence type="inferred from homology"/>
<feature type="chain" id="PRO_0000356358" description="Large ribosomal subunit protein bL33">
    <location>
        <begin position="1"/>
        <end position="55"/>
    </location>
</feature>
<gene>
    <name evidence="1" type="primary">rpmG</name>
    <name type="ordered locus">Acry_0039</name>
</gene>
<protein>
    <recommendedName>
        <fullName evidence="1">Large ribosomal subunit protein bL33</fullName>
    </recommendedName>
    <alternativeName>
        <fullName evidence="2">50S ribosomal protein L33</fullName>
    </alternativeName>
</protein>
<keyword id="KW-1185">Reference proteome</keyword>
<keyword id="KW-0687">Ribonucleoprotein</keyword>
<keyword id="KW-0689">Ribosomal protein</keyword>
<sequence>MAKTNTVQIKLVSTADTGFFYVTKKNAKAQTGKLEFRKYDPVARKHVTFKEAKIK</sequence>
<evidence type="ECO:0000255" key="1">
    <source>
        <dbReference type="HAMAP-Rule" id="MF_00294"/>
    </source>
</evidence>
<evidence type="ECO:0000305" key="2"/>
<accession>A5FUI6</accession>
<comment type="similarity">
    <text evidence="1">Belongs to the bacterial ribosomal protein bL33 family.</text>
</comment>